<accession>Q12RZ8</accession>
<gene>
    <name type="ordered locus">Sden_0486</name>
</gene>
<keyword id="KW-0067">ATP-binding</keyword>
<keyword id="KW-0342">GTP-binding</keyword>
<keyword id="KW-0547">Nucleotide-binding</keyword>
<keyword id="KW-1185">Reference proteome</keyword>
<dbReference type="EMBL" id="CP000302">
    <property type="protein sequence ID" value="ABE53778.1"/>
    <property type="molecule type" value="Genomic_DNA"/>
</dbReference>
<dbReference type="RefSeq" id="WP_011494944.1">
    <property type="nucleotide sequence ID" value="NC_007954.1"/>
</dbReference>
<dbReference type="SMR" id="Q12RZ8"/>
<dbReference type="STRING" id="318161.Sden_0486"/>
<dbReference type="KEGG" id="sdn:Sden_0486"/>
<dbReference type="eggNOG" id="COG1660">
    <property type="taxonomic scope" value="Bacteria"/>
</dbReference>
<dbReference type="HOGENOM" id="CLU_059558_1_1_6"/>
<dbReference type="OrthoDB" id="9784461at2"/>
<dbReference type="Proteomes" id="UP000001982">
    <property type="component" value="Chromosome"/>
</dbReference>
<dbReference type="GO" id="GO:0005524">
    <property type="term" value="F:ATP binding"/>
    <property type="evidence" value="ECO:0007669"/>
    <property type="project" value="UniProtKB-UniRule"/>
</dbReference>
<dbReference type="GO" id="GO:0005525">
    <property type="term" value="F:GTP binding"/>
    <property type="evidence" value="ECO:0007669"/>
    <property type="project" value="UniProtKB-UniRule"/>
</dbReference>
<dbReference type="HAMAP" id="MF_00636">
    <property type="entry name" value="RapZ_like"/>
    <property type="match status" value="1"/>
</dbReference>
<dbReference type="InterPro" id="IPR027417">
    <property type="entry name" value="P-loop_NTPase"/>
</dbReference>
<dbReference type="InterPro" id="IPR005337">
    <property type="entry name" value="RapZ-like"/>
</dbReference>
<dbReference type="InterPro" id="IPR053930">
    <property type="entry name" value="RapZ-like_N"/>
</dbReference>
<dbReference type="InterPro" id="IPR053931">
    <property type="entry name" value="RapZ_C"/>
</dbReference>
<dbReference type="NCBIfam" id="NF003828">
    <property type="entry name" value="PRK05416.1"/>
    <property type="match status" value="1"/>
</dbReference>
<dbReference type="PANTHER" id="PTHR30448">
    <property type="entry name" value="RNASE ADAPTER PROTEIN RAPZ"/>
    <property type="match status" value="1"/>
</dbReference>
<dbReference type="PANTHER" id="PTHR30448:SF0">
    <property type="entry name" value="RNASE ADAPTER PROTEIN RAPZ"/>
    <property type="match status" value="1"/>
</dbReference>
<dbReference type="Pfam" id="PF22740">
    <property type="entry name" value="PapZ_C"/>
    <property type="match status" value="1"/>
</dbReference>
<dbReference type="Pfam" id="PF03668">
    <property type="entry name" value="RapZ-like_N"/>
    <property type="match status" value="1"/>
</dbReference>
<dbReference type="PIRSF" id="PIRSF005052">
    <property type="entry name" value="P-loopkin"/>
    <property type="match status" value="1"/>
</dbReference>
<dbReference type="SUPFAM" id="SSF52540">
    <property type="entry name" value="P-loop containing nucleoside triphosphate hydrolases"/>
    <property type="match status" value="1"/>
</dbReference>
<reference key="1">
    <citation type="submission" date="2006-03" db="EMBL/GenBank/DDBJ databases">
        <title>Complete sequence of Shewanella denitrificans OS217.</title>
        <authorList>
            <consortium name="US DOE Joint Genome Institute"/>
            <person name="Copeland A."/>
            <person name="Lucas S."/>
            <person name="Lapidus A."/>
            <person name="Barry K."/>
            <person name="Detter J.C."/>
            <person name="Glavina del Rio T."/>
            <person name="Hammon N."/>
            <person name="Israni S."/>
            <person name="Dalin E."/>
            <person name="Tice H."/>
            <person name="Pitluck S."/>
            <person name="Brettin T."/>
            <person name="Bruce D."/>
            <person name="Han C."/>
            <person name="Tapia R."/>
            <person name="Gilna P."/>
            <person name="Kiss H."/>
            <person name="Schmutz J."/>
            <person name="Larimer F."/>
            <person name="Land M."/>
            <person name="Hauser L."/>
            <person name="Kyrpides N."/>
            <person name="Lykidis A."/>
            <person name="Richardson P."/>
        </authorList>
    </citation>
    <scope>NUCLEOTIDE SEQUENCE [LARGE SCALE GENOMIC DNA]</scope>
    <source>
        <strain>OS217 / ATCC BAA-1090 / DSM 15013</strain>
    </source>
</reference>
<protein>
    <recommendedName>
        <fullName evidence="1">Nucleotide-binding protein Sden_0486</fullName>
    </recommendedName>
</protein>
<feature type="chain" id="PRO_1000056854" description="Nucleotide-binding protein Sden_0486">
    <location>
        <begin position="1"/>
        <end position="284"/>
    </location>
</feature>
<feature type="binding site" evidence="1">
    <location>
        <begin position="8"/>
        <end position="15"/>
    </location>
    <ligand>
        <name>ATP</name>
        <dbReference type="ChEBI" id="CHEBI:30616"/>
    </ligand>
</feature>
<feature type="binding site" evidence="1">
    <location>
        <begin position="56"/>
        <end position="59"/>
    </location>
    <ligand>
        <name>GTP</name>
        <dbReference type="ChEBI" id="CHEBI:37565"/>
    </ligand>
</feature>
<organism>
    <name type="scientific">Shewanella denitrificans (strain OS217 / ATCC BAA-1090 / DSM 15013)</name>
    <dbReference type="NCBI Taxonomy" id="318161"/>
    <lineage>
        <taxon>Bacteria</taxon>
        <taxon>Pseudomonadati</taxon>
        <taxon>Pseudomonadota</taxon>
        <taxon>Gammaproteobacteria</taxon>
        <taxon>Alteromonadales</taxon>
        <taxon>Shewanellaceae</taxon>
        <taxon>Shewanella</taxon>
    </lineage>
</organism>
<sequence>MKLVIVSGRSGSGKSVALRVLEDLGYYCVDNLPLPLIGSLLAQLKSSNDLVAISVDVRNIAEQGKVLEQQLALLPPETEISSFFLNSSDKVLLKRFSETRRLHPLSRSQMSLQEAIKLEGRLLEPIAKMVDHHIDTSLLNVYELSDQVRQILLGSVDKELVINIESFGFKHGMPTEADFMFDVRFLPNPHWETELRPLTGLDVPVQEFLARQPLVHKLIWQIENLFETWMPHLERNNRSYLTIAIGCTGGQHRSVYIADQLAKRFANGKHVVNARHRELGDVKA</sequence>
<proteinExistence type="inferred from homology"/>
<name>Y486_SHEDO</name>
<evidence type="ECO:0000255" key="1">
    <source>
        <dbReference type="HAMAP-Rule" id="MF_00636"/>
    </source>
</evidence>
<comment type="function">
    <text evidence="1">Displays ATPase and GTPase activities.</text>
</comment>
<comment type="similarity">
    <text evidence="1">Belongs to the RapZ-like family.</text>
</comment>